<name>FMDA_SCHPO</name>
<organism>
    <name type="scientific">Schizosaccharomyces pombe (strain 972 / ATCC 24843)</name>
    <name type="common">Fission yeast</name>
    <dbReference type="NCBI Taxonomy" id="284812"/>
    <lineage>
        <taxon>Eukaryota</taxon>
        <taxon>Fungi</taxon>
        <taxon>Dikarya</taxon>
        <taxon>Ascomycota</taxon>
        <taxon>Taphrinomycotina</taxon>
        <taxon>Schizosaccharomycetes</taxon>
        <taxon>Schizosaccharomycetales</taxon>
        <taxon>Schizosaccharomycetaceae</taxon>
        <taxon>Schizosaccharomyces</taxon>
    </lineage>
</organism>
<feature type="chain" id="PRO_0000316040" description="Putative formamidase C869.04">
    <location>
        <begin position="1"/>
        <end position="410"/>
    </location>
</feature>
<proteinExistence type="inferred from homology"/>
<comment type="function">
    <text evidence="1">Hydrolyzes formamide with the production of ammonia which can be used as a source of nitrogen for growth. May also act on acetamide, propanamide and butanamide (By similarity).</text>
</comment>
<comment type="catalytic activity">
    <reaction>
        <text>formamide + H2O = formate + NH4(+)</text>
        <dbReference type="Rhea" id="RHEA:21948"/>
        <dbReference type="ChEBI" id="CHEBI:15377"/>
        <dbReference type="ChEBI" id="CHEBI:15740"/>
        <dbReference type="ChEBI" id="CHEBI:16397"/>
        <dbReference type="ChEBI" id="CHEBI:28938"/>
        <dbReference type="EC" id="3.5.1.49"/>
    </reaction>
</comment>
<comment type="subunit">
    <text evidence="1">Homotrimer.</text>
</comment>
<comment type="subcellular location">
    <subcellularLocation>
        <location evidence="2">Cytoplasm</location>
    </subcellularLocation>
    <subcellularLocation>
        <location evidence="2">Nucleus</location>
    </subcellularLocation>
</comment>
<comment type="similarity">
    <text evidence="3">Belongs to the acetamidase/formamidase family.</text>
</comment>
<evidence type="ECO:0000250" key="1"/>
<evidence type="ECO:0000269" key="2">
    <source>
    </source>
</evidence>
<evidence type="ECO:0000305" key="3"/>
<dbReference type="EC" id="3.5.1.49"/>
<dbReference type="EMBL" id="CU329670">
    <property type="protein sequence ID" value="CAB60014.1"/>
    <property type="molecule type" value="Genomic_DNA"/>
</dbReference>
<dbReference type="PIR" id="T39115">
    <property type="entry name" value="T39115"/>
</dbReference>
<dbReference type="RefSeq" id="NP_595015.1">
    <property type="nucleotide sequence ID" value="NM_001020446.1"/>
</dbReference>
<dbReference type="SMR" id="Q9URY7"/>
<dbReference type="BioGRID" id="279569">
    <property type="interactions" value="5"/>
</dbReference>
<dbReference type="FunCoup" id="Q9URY7">
    <property type="interactions" value="163"/>
</dbReference>
<dbReference type="STRING" id="284812.Q9URY7"/>
<dbReference type="iPTMnet" id="Q9URY7"/>
<dbReference type="PaxDb" id="4896-SPAC869.04.1"/>
<dbReference type="EnsemblFungi" id="SPAC869.04.1">
    <property type="protein sequence ID" value="SPAC869.04.1:pep"/>
    <property type="gene ID" value="SPAC869.04"/>
</dbReference>
<dbReference type="KEGG" id="spo:2543137"/>
<dbReference type="PomBase" id="SPAC869.04"/>
<dbReference type="VEuPathDB" id="FungiDB:SPAC869.04"/>
<dbReference type="eggNOG" id="ENOG502QRMK">
    <property type="taxonomic scope" value="Eukaryota"/>
</dbReference>
<dbReference type="HOGENOM" id="CLU_032013_0_1_1"/>
<dbReference type="InParanoid" id="Q9URY7"/>
<dbReference type="OMA" id="ATWNKRE"/>
<dbReference type="PhylomeDB" id="Q9URY7"/>
<dbReference type="PRO" id="PR:Q9URY7"/>
<dbReference type="Proteomes" id="UP000002485">
    <property type="component" value="Chromosome I"/>
</dbReference>
<dbReference type="GO" id="GO:0005829">
    <property type="term" value="C:cytosol"/>
    <property type="evidence" value="ECO:0007005"/>
    <property type="project" value="PomBase"/>
</dbReference>
<dbReference type="GO" id="GO:0005634">
    <property type="term" value="C:nucleus"/>
    <property type="evidence" value="ECO:0007005"/>
    <property type="project" value="PomBase"/>
</dbReference>
<dbReference type="GO" id="GO:0004328">
    <property type="term" value="F:formamidase activity"/>
    <property type="evidence" value="ECO:0007669"/>
    <property type="project" value="UniProtKB-EC"/>
</dbReference>
<dbReference type="Gene3D" id="2.60.120.580">
    <property type="entry name" value="Acetamidase/Formamidase-like domains"/>
    <property type="match status" value="1"/>
</dbReference>
<dbReference type="InterPro" id="IPR004304">
    <property type="entry name" value="FmdA_AmdA"/>
</dbReference>
<dbReference type="InterPro" id="IPR054833">
    <property type="entry name" value="FormamaseFmdA"/>
</dbReference>
<dbReference type="NCBIfam" id="NF045496">
    <property type="entry name" value="FormamaseFmdA"/>
    <property type="match status" value="1"/>
</dbReference>
<dbReference type="PANTHER" id="PTHR31891">
    <property type="entry name" value="FORMAMIDASE C869.04-RELATED"/>
    <property type="match status" value="1"/>
</dbReference>
<dbReference type="PANTHER" id="PTHR31891:SF1">
    <property type="entry name" value="FORMAMIDASE C869.04-RELATED"/>
    <property type="match status" value="1"/>
</dbReference>
<dbReference type="Pfam" id="PF03069">
    <property type="entry name" value="FmdA_AmdA"/>
    <property type="match status" value="1"/>
</dbReference>
<dbReference type="SUPFAM" id="SSF141130">
    <property type="entry name" value="Acetamidase/Formamidase-like"/>
    <property type="match status" value="1"/>
</dbReference>
<keyword id="KW-0963">Cytoplasm</keyword>
<keyword id="KW-0378">Hydrolase</keyword>
<keyword id="KW-0539">Nucleus</keyword>
<keyword id="KW-1185">Reference proteome</keyword>
<protein>
    <recommendedName>
        <fullName>Putative formamidase C869.04</fullName>
        <ecNumber>3.5.1.49</ecNumber>
    </recommendedName>
    <alternativeName>
        <fullName>Formamide amidohydrolase</fullName>
    </alternativeName>
</protein>
<sequence length="410" mass="44793">MAPRTIVKVDLNKPAWEQPNLHNRWHPDIPFAESIDEGETVKIECLDWTGGQIKNDDSAEDIKNVDLTRIHYLSGPFEIKGAEPGDVLVVEIQDVQPLENQPWGYSGIFAKENGGGFLDEHYPKAAKAVFDFEGIFCSSRHIPGVRFPGLIHPGIIGTAPSKEILAEWNRREGALVAENPHSTHVMAQLPNASYAFAGILADEKLSATVASEGARTIPGRPENGGNCDIKNLSRGSKVFLPVHVPGAKLSIGDLHFSQGDGEISFCGAIEMAGSITIKCKILKNGISDLAMKSPMYLPGPVEPHFSPSRYLTFEGFSVDESGKQHYLCTTTAYRQTCLRVIEYFRRFGYNDYQLYLLLSCAPIQGHVAGIVDIPNSCTTIGVPMDIFEFDVSPNGKAKIIDLGSCAFANS</sequence>
<reference key="1">
    <citation type="journal article" date="2002" name="Nature">
        <title>The genome sequence of Schizosaccharomyces pombe.</title>
        <authorList>
            <person name="Wood V."/>
            <person name="Gwilliam R."/>
            <person name="Rajandream M.A."/>
            <person name="Lyne M.H."/>
            <person name="Lyne R."/>
            <person name="Stewart A."/>
            <person name="Sgouros J.G."/>
            <person name="Peat N."/>
            <person name="Hayles J."/>
            <person name="Baker S.G."/>
            <person name="Basham D."/>
            <person name="Bowman S."/>
            <person name="Brooks K."/>
            <person name="Brown D."/>
            <person name="Brown S."/>
            <person name="Chillingworth T."/>
            <person name="Churcher C.M."/>
            <person name="Collins M."/>
            <person name="Connor R."/>
            <person name="Cronin A."/>
            <person name="Davis P."/>
            <person name="Feltwell T."/>
            <person name="Fraser A."/>
            <person name="Gentles S."/>
            <person name="Goble A."/>
            <person name="Hamlin N."/>
            <person name="Harris D.E."/>
            <person name="Hidalgo J."/>
            <person name="Hodgson G."/>
            <person name="Holroyd S."/>
            <person name="Hornsby T."/>
            <person name="Howarth S."/>
            <person name="Huckle E.J."/>
            <person name="Hunt S."/>
            <person name="Jagels K."/>
            <person name="James K.D."/>
            <person name="Jones L."/>
            <person name="Jones M."/>
            <person name="Leather S."/>
            <person name="McDonald S."/>
            <person name="McLean J."/>
            <person name="Mooney P."/>
            <person name="Moule S."/>
            <person name="Mungall K.L."/>
            <person name="Murphy L.D."/>
            <person name="Niblett D."/>
            <person name="Odell C."/>
            <person name="Oliver K."/>
            <person name="O'Neil S."/>
            <person name="Pearson D."/>
            <person name="Quail M.A."/>
            <person name="Rabbinowitsch E."/>
            <person name="Rutherford K.M."/>
            <person name="Rutter S."/>
            <person name="Saunders D."/>
            <person name="Seeger K."/>
            <person name="Sharp S."/>
            <person name="Skelton J."/>
            <person name="Simmonds M.N."/>
            <person name="Squares R."/>
            <person name="Squares S."/>
            <person name="Stevens K."/>
            <person name="Taylor K."/>
            <person name="Taylor R.G."/>
            <person name="Tivey A."/>
            <person name="Walsh S.V."/>
            <person name="Warren T."/>
            <person name="Whitehead S."/>
            <person name="Woodward J.R."/>
            <person name="Volckaert G."/>
            <person name="Aert R."/>
            <person name="Robben J."/>
            <person name="Grymonprez B."/>
            <person name="Weltjens I."/>
            <person name="Vanstreels E."/>
            <person name="Rieger M."/>
            <person name="Schaefer M."/>
            <person name="Mueller-Auer S."/>
            <person name="Gabel C."/>
            <person name="Fuchs M."/>
            <person name="Duesterhoeft A."/>
            <person name="Fritzc C."/>
            <person name="Holzer E."/>
            <person name="Moestl D."/>
            <person name="Hilbert H."/>
            <person name="Borzym K."/>
            <person name="Langer I."/>
            <person name="Beck A."/>
            <person name="Lehrach H."/>
            <person name="Reinhardt R."/>
            <person name="Pohl T.M."/>
            <person name="Eger P."/>
            <person name="Zimmermann W."/>
            <person name="Wedler H."/>
            <person name="Wambutt R."/>
            <person name="Purnelle B."/>
            <person name="Goffeau A."/>
            <person name="Cadieu E."/>
            <person name="Dreano S."/>
            <person name="Gloux S."/>
            <person name="Lelaure V."/>
            <person name="Mottier S."/>
            <person name="Galibert F."/>
            <person name="Aves S.J."/>
            <person name="Xiang Z."/>
            <person name="Hunt C."/>
            <person name="Moore K."/>
            <person name="Hurst S.M."/>
            <person name="Lucas M."/>
            <person name="Rochet M."/>
            <person name="Gaillardin C."/>
            <person name="Tallada V.A."/>
            <person name="Garzon A."/>
            <person name="Thode G."/>
            <person name="Daga R.R."/>
            <person name="Cruzado L."/>
            <person name="Jimenez J."/>
            <person name="Sanchez M."/>
            <person name="del Rey F."/>
            <person name="Benito J."/>
            <person name="Dominguez A."/>
            <person name="Revuelta J.L."/>
            <person name="Moreno S."/>
            <person name="Armstrong J."/>
            <person name="Forsburg S.L."/>
            <person name="Cerutti L."/>
            <person name="Lowe T."/>
            <person name="McCombie W.R."/>
            <person name="Paulsen I."/>
            <person name="Potashkin J."/>
            <person name="Shpakovski G.V."/>
            <person name="Ussery D."/>
            <person name="Barrell B.G."/>
            <person name="Nurse P."/>
        </authorList>
    </citation>
    <scope>NUCLEOTIDE SEQUENCE [LARGE SCALE GENOMIC DNA]</scope>
    <source>
        <strain>972 / ATCC 24843</strain>
    </source>
</reference>
<reference key="2">
    <citation type="journal article" date="2006" name="Nat. Biotechnol.">
        <title>ORFeome cloning and global analysis of protein localization in the fission yeast Schizosaccharomyces pombe.</title>
        <authorList>
            <person name="Matsuyama A."/>
            <person name="Arai R."/>
            <person name="Yashiroda Y."/>
            <person name="Shirai A."/>
            <person name="Kamata A."/>
            <person name="Sekido S."/>
            <person name="Kobayashi Y."/>
            <person name="Hashimoto A."/>
            <person name="Hamamoto M."/>
            <person name="Hiraoka Y."/>
            <person name="Horinouchi S."/>
            <person name="Yoshida M."/>
        </authorList>
    </citation>
    <scope>SUBCELLULAR LOCATION [LARGE SCALE ANALYSIS]</scope>
</reference>
<accession>Q9URY7</accession>
<gene>
    <name type="ORF">SPAC869.04</name>
</gene>